<feature type="chain" id="PRO_0000296881" description="DNA-directed RNA polymerase subunit alpha">
    <location>
        <begin position="1"/>
        <end position="330"/>
    </location>
</feature>
<feature type="region of interest" description="Alpha N-terminal domain (alpha-NTD)" evidence="1">
    <location>
        <begin position="1"/>
        <end position="235"/>
    </location>
</feature>
<feature type="region of interest" description="Alpha C-terminal domain (alpha-CTD)" evidence="1">
    <location>
        <begin position="249"/>
        <end position="330"/>
    </location>
</feature>
<reference key="1">
    <citation type="journal article" date="2006" name="PLoS Genet.">
        <title>The complete genome sequence and comparative genome analysis of the high pathogenicity Yersinia enterocolitica strain 8081.</title>
        <authorList>
            <person name="Thomson N.R."/>
            <person name="Howard S."/>
            <person name="Wren B.W."/>
            <person name="Holden M.T.G."/>
            <person name="Crossman L."/>
            <person name="Challis G.L."/>
            <person name="Churcher C."/>
            <person name="Mungall K."/>
            <person name="Brooks K."/>
            <person name="Chillingworth T."/>
            <person name="Feltwell T."/>
            <person name="Abdellah Z."/>
            <person name="Hauser H."/>
            <person name="Jagels K."/>
            <person name="Maddison M."/>
            <person name="Moule S."/>
            <person name="Sanders M."/>
            <person name="Whitehead S."/>
            <person name="Quail M.A."/>
            <person name="Dougan G."/>
            <person name="Parkhill J."/>
            <person name="Prentice M.B."/>
        </authorList>
    </citation>
    <scope>NUCLEOTIDE SEQUENCE [LARGE SCALE GENOMIC DNA]</scope>
    <source>
        <strain>NCTC 13174 / 8081</strain>
    </source>
</reference>
<organism>
    <name type="scientific">Yersinia enterocolitica serotype O:8 / biotype 1B (strain NCTC 13174 / 8081)</name>
    <dbReference type="NCBI Taxonomy" id="393305"/>
    <lineage>
        <taxon>Bacteria</taxon>
        <taxon>Pseudomonadati</taxon>
        <taxon>Pseudomonadota</taxon>
        <taxon>Gammaproteobacteria</taxon>
        <taxon>Enterobacterales</taxon>
        <taxon>Yersiniaceae</taxon>
        <taxon>Yersinia</taxon>
    </lineage>
</organism>
<protein>
    <recommendedName>
        <fullName evidence="1">DNA-directed RNA polymerase subunit alpha</fullName>
        <shortName evidence="1">RNAP subunit alpha</shortName>
        <ecNumber evidence="1">2.7.7.6</ecNumber>
    </recommendedName>
    <alternativeName>
        <fullName evidence="1">RNA polymerase subunit alpha</fullName>
    </alternativeName>
    <alternativeName>
        <fullName evidence="1">Transcriptase subunit alpha</fullName>
    </alternativeName>
</protein>
<dbReference type="EC" id="2.7.7.6" evidence="1"/>
<dbReference type="EMBL" id="AM286415">
    <property type="protein sequence ID" value="CAL13917.1"/>
    <property type="molecule type" value="Genomic_DNA"/>
</dbReference>
<dbReference type="RefSeq" id="WP_004709232.1">
    <property type="nucleotide sequence ID" value="NC_008800.1"/>
</dbReference>
<dbReference type="RefSeq" id="YP_001008043.1">
    <property type="nucleotide sequence ID" value="NC_008800.1"/>
</dbReference>
<dbReference type="BMRB" id="A1JS01"/>
<dbReference type="SMR" id="A1JS01"/>
<dbReference type="KEGG" id="yen:YE3898"/>
<dbReference type="PATRIC" id="fig|393305.7.peg.4148"/>
<dbReference type="eggNOG" id="COG0202">
    <property type="taxonomic scope" value="Bacteria"/>
</dbReference>
<dbReference type="HOGENOM" id="CLU_053084_0_0_6"/>
<dbReference type="OrthoDB" id="9805706at2"/>
<dbReference type="Proteomes" id="UP000000642">
    <property type="component" value="Chromosome"/>
</dbReference>
<dbReference type="GO" id="GO:0005737">
    <property type="term" value="C:cytoplasm"/>
    <property type="evidence" value="ECO:0007669"/>
    <property type="project" value="UniProtKB-ARBA"/>
</dbReference>
<dbReference type="GO" id="GO:0000428">
    <property type="term" value="C:DNA-directed RNA polymerase complex"/>
    <property type="evidence" value="ECO:0007669"/>
    <property type="project" value="UniProtKB-KW"/>
</dbReference>
<dbReference type="GO" id="GO:0003677">
    <property type="term" value="F:DNA binding"/>
    <property type="evidence" value="ECO:0007669"/>
    <property type="project" value="UniProtKB-UniRule"/>
</dbReference>
<dbReference type="GO" id="GO:0003899">
    <property type="term" value="F:DNA-directed RNA polymerase activity"/>
    <property type="evidence" value="ECO:0007669"/>
    <property type="project" value="UniProtKB-UniRule"/>
</dbReference>
<dbReference type="GO" id="GO:0046983">
    <property type="term" value="F:protein dimerization activity"/>
    <property type="evidence" value="ECO:0007669"/>
    <property type="project" value="InterPro"/>
</dbReference>
<dbReference type="GO" id="GO:0006351">
    <property type="term" value="P:DNA-templated transcription"/>
    <property type="evidence" value="ECO:0007669"/>
    <property type="project" value="UniProtKB-UniRule"/>
</dbReference>
<dbReference type="CDD" id="cd06928">
    <property type="entry name" value="RNAP_alpha_NTD"/>
    <property type="match status" value="1"/>
</dbReference>
<dbReference type="FunFam" id="1.10.150.20:FF:000001">
    <property type="entry name" value="DNA-directed RNA polymerase subunit alpha"/>
    <property type="match status" value="1"/>
</dbReference>
<dbReference type="FunFam" id="2.170.120.12:FF:000001">
    <property type="entry name" value="DNA-directed RNA polymerase subunit alpha"/>
    <property type="match status" value="1"/>
</dbReference>
<dbReference type="Gene3D" id="1.10.150.20">
    <property type="entry name" value="5' to 3' exonuclease, C-terminal subdomain"/>
    <property type="match status" value="1"/>
</dbReference>
<dbReference type="Gene3D" id="2.170.120.12">
    <property type="entry name" value="DNA-directed RNA polymerase, insert domain"/>
    <property type="match status" value="1"/>
</dbReference>
<dbReference type="Gene3D" id="3.30.1360.10">
    <property type="entry name" value="RNA polymerase, RBP11-like subunit"/>
    <property type="match status" value="1"/>
</dbReference>
<dbReference type="HAMAP" id="MF_00059">
    <property type="entry name" value="RNApol_bact_RpoA"/>
    <property type="match status" value="1"/>
</dbReference>
<dbReference type="InterPro" id="IPR011262">
    <property type="entry name" value="DNA-dir_RNA_pol_insert"/>
</dbReference>
<dbReference type="InterPro" id="IPR011263">
    <property type="entry name" value="DNA-dir_RNA_pol_RpoA/D/Rpb3"/>
</dbReference>
<dbReference type="InterPro" id="IPR011773">
    <property type="entry name" value="DNA-dir_RpoA"/>
</dbReference>
<dbReference type="InterPro" id="IPR036603">
    <property type="entry name" value="RBP11-like"/>
</dbReference>
<dbReference type="InterPro" id="IPR011260">
    <property type="entry name" value="RNAP_asu_C"/>
</dbReference>
<dbReference type="InterPro" id="IPR036643">
    <property type="entry name" value="RNApol_insert_sf"/>
</dbReference>
<dbReference type="NCBIfam" id="NF003513">
    <property type="entry name" value="PRK05182.1-2"/>
    <property type="match status" value="1"/>
</dbReference>
<dbReference type="NCBIfam" id="NF003519">
    <property type="entry name" value="PRK05182.2-5"/>
    <property type="match status" value="1"/>
</dbReference>
<dbReference type="NCBIfam" id="TIGR02027">
    <property type="entry name" value="rpoA"/>
    <property type="match status" value="1"/>
</dbReference>
<dbReference type="Pfam" id="PF01000">
    <property type="entry name" value="RNA_pol_A_bac"/>
    <property type="match status" value="1"/>
</dbReference>
<dbReference type="Pfam" id="PF03118">
    <property type="entry name" value="RNA_pol_A_CTD"/>
    <property type="match status" value="1"/>
</dbReference>
<dbReference type="Pfam" id="PF01193">
    <property type="entry name" value="RNA_pol_L"/>
    <property type="match status" value="1"/>
</dbReference>
<dbReference type="SMART" id="SM00662">
    <property type="entry name" value="RPOLD"/>
    <property type="match status" value="1"/>
</dbReference>
<dbReference type="SUPFAM" id="SSF47789">
    <property type="entry name" value="C-terminal domain of RNA polymerase alpha subunit"/>
    <property type="match status" value="1"/>
</dbReference>
<dbReference type="SUPFAM" id="SSF56553">
    <property type="entry name" value="Insert subdomain of RNA polymerase alpha subunit"/>
    <property type="match status" value="1"/>
</dbReference>
<dbReference type="SUPFAM" id="SSF55257">
    <property type="entry name" value="RBP11-like subunits of RNA polymerase"/>
    <property type="match status" value="1"/>
</dbReference>
<comment type="function">
    <text>DNA-dependent RNA polymerase catalyzes the transcription of DNA into RNA using the four ribonucleoside triphosphates as substrates.</text>
</comment>
<comment type="catalytic activity">
    <reaction evidence="1">
        <text>RNA(n) + a ribonucleoside 5'-triphosphate = RNA(n+1) + diphosphate</text>
        <dbReference type="Rhea" id="RHEA:21248"/>
        <dbReference type="Rhea" id="RHEA-COMP:14527"/>
        <dbReference type="Rhea" id="RHEA-COMP:17342"/>
        <dbReference type="ChEBI" id="CHEBI:33019"/>
        <dbReference type="ChEBI" id="CHEBI:61557"/>
        <dbReference type="ChEBI" id="CHEBI:140395"/>
        <dbReference type="EC" id="2.7.7.6"/>
    </reaction>
</comment>
<comment type="subunit">
    <text evidence="1">Homodimer. The RNAP catalytic core consists of 2 alpha, 1 beta, 1 beta' and 1 omega subunit. When a sigma factor is associated with the core the holoenzyme is formed, which can initiate transcription.</text>
</comment>
<comment type="domain">
    <text evidence="1">The N-terminal domain is essential for RNAP assembly and basal transcription, whereas the C-terminal domain is involved in interaction with transcriptional regulators and with upstream promoter elements.</text>
</comment>
<comment type="similarity">
    <text evidence="1">Belongs to the RNA polymerase alpha chain family.</text>
</comment>
<sequence>MQGSVTEFLKPRLVDIEQVSSTHAKVTLEPLERGFGHTLGNALRRILLSSMPGCAVTEVEIDGVLHEYSTKEGVQEDILEILLNLKGLAVRVQGKDEVILTLNKSGIGPVTAADITHDGDVEIVKPQHVICHLTDENASISMRIKVQRGRGYVPASARIHSEEDERPIGRLLVDACYSPVERIAYNVEAARVEQRTDLDKLVIEMETNGTIDPEEAIRRAATILAEQLEAFVDLRDVRQPEVKEEKPEFDPILLRPVDDLELTVRSANCLKAEAIHYIGDLVQRTEVELLKTPNLGKKSLTEIKDVLASRGLSLGMRLENWPPASIADNE</sequence>
<gene>
    <name evidence="1" type="primary">rpoA</name>
    <name type="ordered locus">YE3898</name>
</gene>
<proteinExistence type="inferred from homology"/>
<evidence type="ECO:0000255" key="1">
    <source>
        <dbReference type="HAMAP-Rule" id="MF_00059"/>
    </source>
</evidence>
<accession>A1JS01</accession>
<keyword id="KW-0240">DNA-directed RNA polymerase</keyword>
<keyword id="KW-0548">Nucleotidyltransferase</keyword>
<keyword id="KW-0804">Transcription</keyword>
<keyword id="KW-0808">Transferase</keyword>
<name>RPOA_YERE8</name>